<accession>P52659</accession>
<evidence type="ECO:0000255" key="1">
    <source>
        <dbReference type="PROSITE-ProRule" id="PRU00253"/>
    </source>
</evidence>
<evidence type="ECO:0000303" key="2">
    <source>
    </source>
</evidence>
<evidence type="ECO:0000305" key="3"/>
<evidence type="ECO:0000305" key="4">
    <source>
    </source>
</evidence>
<organism>
    <name type="scientific">Streptomyces antibioticus</name>
    <dbReference type="NCBI Taxonomy" id="1890"/>
    <lineage>
        <taxon>Bacteria</taxon>
        <taxon>Bacillati</taxon>
        <taxon>Actinomycetota</taxon>
        <taxon>Actinomycetes</taxon>
        <taxon>Kitasatosporales</taxon>
        <taxon>Streptomycetaceae</taxon>
        <taxon>Streptomyces</taxon>
    </lineage>
</organism>
<feature type="chain" id="PRO_0000105592" description="HTH-type transcriptional regulator AbaB">
    <location>
        <begin position="1"/>
        <end position="301"/>
    </location>
</feature>
<feature type="domain" description="HTH lysR-type" evidence="1">
    <location>
        <begin position="1"/>
        <end position="58"/>
    </location>
</feature>
<feature type="DNA-binding region" description="H-T-H motif" evidence="1">
    <location>
        <begin position="18"/>
        <end position="37"/>
    </location>
</feature>
<comment type="function">
    <text evidence="4">Putative regulator that may be involved in stimulating antibiotic production in S.antibioticus.</text>
</comment>
<comment type="similarity">
    <text evidence="3">Belongs to the LysR transcriptional regulatory family.</text>
</comment>
<keyword id="KW-0238">DNA-binding</keyword>
<keyword id="KW-0804">Transcription</keyword>
<keyword id="KW-0805">Transcription regulation</keyword>
<reference key="1">
    <citation type="journal article" date="1997" name="FEMS Microbiol. Lett.">
        <title>abaB, a putative regulator for secondary metabolism in Streptomyces.</title>
        <authorList>
            <person name="Scheu A.K."/>
            <person name="Martinez E."/>
            <person name="Soliveri J."/>
            <person name="Malpartida F."/>
        </authorList>
    </citation>
    <scope>NUCLEOTIDE SEQUENCE [GENOMIC DNA]</scope>
    <scope>PUTATIVE FUNCTION</scope>
    <source>
        <strain>ATCC 11891 / DSM 40868 / BCRC 11580 / NCIMB 11506 / PSA 205</strain>
    </source>
</reference>
<sequence>MDLALLRTFVTVHRAGSFTRAAALLGLSQPAVTSQIRTLERQLGRPLFLRQARGVTPTTIGDELAHRAAPHLDALVEIAESGLDDDSSSRTLYLAGPPEFTTERVLPALTGLTGDDGQGLTLRVSFGTAEETLEGLSCGRHDLAISTTRPRGALLSATPLCDEEHVLVAAPRWAERIGADTVRLKGAPALDDLPVVEVHESLPFVSRYWASVFDCAPAATGTVIVPDLRAVLSCASAGAGLAVLPRYLCARALEQGAVVTLLDPVVPPLRTYFLVVRTGTLALPHVARAHEWLRHAATAWC</sequence>
<proteinExistence type="inferred from homology"/>
<protein>
    <recommendedName>
        <fullName evidence="4">HTH-type transcriptional regulator AbaB</fullName>
    </recommendedName>
</protein>
<name>ABAB_STRAT</name>
<dbReference type="EMBL" id="X91393">
    <property type="protein sequence ID" value="CAA62739.1"/>
    <property type="molecule type" value="Genomic_DNA"/>
</dbReference>
<dbReference type="SMR" id="P52659"/>
<dbReference type="STRING" id="1890.AFM16_19510"/>
<dbReference type="GO" id="GO:0003700">
    <property type="term" value="F:DNA-binding transcription factor activity"/>
    <property type="evidence" value="ECO:0007669"/>
    <property type="project" value="InterPro"/>
</dbReference>
<dbReference type="GO" id="GO:0000976">
    <property type="term" value="F:transcription cis-regulatory region binding"/>
    <property type="evidence" value="ECO:0007669"/>
    <property type="project" value="TreeGrafter"/>
</dbReference>
<dbReference type="FunFam" id="1.10.10.10:FF:000001">
    <property type="entry name" value="LysR family transcriptional regulator"/>
    <property type="match status" value="1"/>
</dbReference>
<dbReference type="Gene3D" id="3.40.190.290">
    <property type="match status" value="1"/>
</dbReference>
<dbReference type="Gene3D" id="1.10.10.10">
    <property type="entry name" value="Winged helix-like DNA-binding domain superfamily/Winged helix DNA-binding domain"/>
    <property type="match status" value="1"/>
</dbReference>
<dbReference type="InterPro" id="IPR005119">
    <property type="entry name" value="LysR_subst-bd"/>
</dbReference>
<dbReference type="InterPro" id="IPR000847">
    <property type="entry name" value="Tscrpt_reg_HTH_LysR"/>
</dbReference>
<dbReference type="InterPro" id="IPR036388">
    <property type="entry name" value="WH-like_DNA-bd_sf"/>
</dbReference>
<dbReference type="InterPro" id="IPR036390">
    <property type="entry name" value="WH_DNA-bd_sf"/>
</dbReference>
<dbReference type="PANTHER" id="PTHR30126">
    <property type="entry name" value="HTH-TYPE TRANSCRIPTIONAL REGULATOR"/>
    <property type="match status" value="1"/>
</dbReference>
<dbReference type="PANTHER" id="PTHR30126:SF39">
    <property type="entry name" value="HTH-TYPE TRANSCRIPTIONAL REGULATOR CYSL"/>
    <property type="match status" value="1"/>
</dbReference>
<dbReference type="Pfam" id="PF00126">
    <property type="entry name" value="HTH_1"/>
    <property type="match status" value="1"/>
</dbReference>
<dbReference type="Pfam" id="PF03466">
    <property type="entry name" value="LysR_substrate"/>
    <property type="match status" value="1"/>
</dbReference>
<dbReference type="PRINTS" id="PR00039">
    <property type="entry name" value="HTHLYSR"/>
</dbReference>
<dbReference type="SUPFAM" id="SSF53850">
    <property type="entry name" value="Periplasmic binding protein-like II"/>
    <property type="match status" value="1"/>
</dbReference>
<dbReference type="SUPFAM" id="SSF46785">
    <property type="entry name" value="Winged helix' DNA-binding domain"/>
    <property type="match status" value="1"/>
</dbReference>
<dbReference type="PROSITE" id="PS50931">
    <property type="entry name" value="HTH_LYSR"/>
    <property type="match status" value="1"/>
</dbReference>
<gene>
    <name evidence="2" type="primary">abaB</name>
</gene>